<keyword id="KW-0160">Chromosomal rearrangement</keyword>
<keyword id="KW-1185">Reference proteome</keyword>
<accession>Q59P96</accession>
<accession>A0A1D8PM22</accession>
<organism>
    <name type="scientific">Candida albicans (strain SC5314 / ATCC MYA-2876)</name>
    <name type="common">Yeast</name>
    <dbReference type="NCBI Taxonomy" id="237561"/>
    <lineage>
        <taxon>Eukaryota</taxon>
        <taxon>Fungi</taxon>
        <taxon>Dikarya</taxon>
        <taxon>Ascomycota</taxon>
        <taxon>Saccharomycotina</taxon>
        <taxon>Pichiomycetes</taxon>
        <taxon>Debaryomycetaceae</taxon>
        <taxon>Candida/Lodderomyces clade</taxon>
        <taxon>Candida</taxon>
    </lineage>
</organism>
<proteinExistence type="inferred from homology"/>
<comment type="function">
    <text evidence="1">Involved in gross chromosomal rearrangements (GCRs) and telomere healing.</text>
</comment>
<comment type="similarity">
    <text evidence="2">Belongs to the IRC6 family.</text>
</comment>
<protein>
    <recommendedName>
        <fullName>Increased recombination centers protein 6</fullName>
    </recommendedName>
</protein>
<gene>
    <name type="primary">IRC6</name>
    <name type="ordered locus">CAALFM_C404280CA</name>
    <name type="ORF">CaO19.1420</name>
    <name type="ORF">CaO19.8996</name>
</gene>
<name>IRC6_CANAL</name>
<dbReference type="EMBL" id="CP017626">
    <property type="protein sequence ID" value="AOW29177.1"/>
    <property type="molecule type" value="Genomic_DNA"/>
</dbReference>
<dbReference type="RefSeq" id="XP_711548.1">
    <property type="nucleotide sequence ID" value="XM_706456.1"/>
</dbReference>
<dbReference type="SMR" id="Q59P96"/>
<dbReference type="FunCoup" id="Q59P96">
    <property type="interactions" value="25"/>
</dbReference>
<dbReference type="STRING" id="237561.Q59P96"/>
<dbReference type="EnsemblFungi" id="C4_04280C_A-T">
    <property type="protein sequence ID" value="C4_04280C_A-T-p1"/>
    <property type="gene ID" value="C4_04280C_A"/>
</dbReference>
<dbReference type="GeneID" id="3646846"/>
<dbReference type="KEGG" id="cal:CAALFM_C404280CA"/>
<dbReference type="CGD" id="CAL0000197623">
    <property type="gene designation" value="orf19.8996"/>
</dbReference>
<dbReference type="VEuPathDB" id="FungiDB:C4_04280C_A"/>
<dbReference type="eggNOG" id="ENOG502SAXB">
    <property type="taxonomic scope" value="Eukaryota"/>
</dbReference>
<dbReference type="HOGENOM" id="CLU_064540_0_0_1"/>
<dbReference type="InParanoid" id="Q59P96"/>
<dbReference type="OMA" id="LMFTINM"/>
<dbReference type="OrthoDB" id="10261384at2759"/>
<dbReference type="PRO" id="PR:Q59P96"/>
<dbReference type="Proteomes" id="UP000000559">
    <property type="component" value="Chromosome 4"/>
</dbReference>
<dbReference type="GO" id="GO:0030674">
    <property type="term" value="F:protein-macromolecule adaptor activity"/>
    <property type="evidence" value="ECO:0000318"/>
    <property type="project" value="GO_Central"/>
</dbReference>
<dbReference type="GO" id="GO:0016192">
    <property type="term" value="P:vesicle-mediated transport"/>
    <property type="evidence" value="ECO:0000318"/>
    <property type="project" value="GO_Central"/>
</dbReference>
<dbReference type="FunFam" id="3.40.50.11960:FF:000003">
    <property type="entry name" value="Increased recombination centers protein 6"/>
    <property type="match status" value="1"/>
</dbReference>
<dbReference type="Gene3D" id="3.40.50.11960">
    <property type="match status" value="1"/>
</dbReference>
<dbReference type="InterPro" id="IPR034627">
    <property type="entry name" value="Irc6"/>
</dbReference>
<dbReference type="PANTHER" id="PTHR28043">
    <property type="entry name" value="INCREASED RECOMBINATION CENTERS PROTEIN 6"/>
    <property type="match status" value="1"/>
</dbReference>
<dbReference type="PANTHER" id="PTHR28043:SF1">
    <property type="entry name" value="INCREASED RECOMBINATION CENTERS PROTEIN 6"/>
    <property type="match status" value="1"/>
</dbReference>
<dbReference type="Pfam" id="PF10199">
    <property type="entry name" value="Adaptin_binding"/>
    <property type="match status" value="1"/>
</dbReference>
<sequence length="275" mass="31776">MIPNHILILGSPNSGKLRIANLISKNEEIPNLEDVESHSGLIVKTSLRTKYYFLKLNILIDEYSESKEATDEKKLSELHKWYQEFKSEEFGELREVLDGLMFTINMKTDSISFIGDALEIIEQIKISLGDEENLHDWGGFIAVVGSCPENQIVEDDLILEIEDMVLSQGLEFINLSTEGENEYKEKQGKDRIVELIESHDWTNLEMLKVDSKQYETNKLAKMESMKQKLINEKEELDLDDIFSKLNLARDHAQSLTQDERDKYANKVIEEIIDFL</sequence>
<evidence type="ECO:0000250" key="1"/>
<evidence type="ECO:0000305" key="2"/>
<feature type="chain" id="PRO_0000399216" description="Increased recombination centers protein 6">
    <location>
        <begin position="1"/>
        <end position="275"/>
    </location>
</feature>
<reference key="1">
    <citation type="journal article" date="2004" name="Proc. Natl. Acad. Sci. U.S.A.">
        <title>The diploid genome sequence of Candida albicans.</title>
        <authorList>
            <person name="Jones T."/>
            <person name="Federspiel N.A."/>
            <person name="Chibana H."/>
            <person name="Dungan J."/>
            <person name="Kalman S."/>
            <person name="Magee B.B."/>
            <person name="Newport G."/>
            <person name="Thorstenson Y.R."/>
            <person name="Agabian N."/>
            <person name="Magee P.T."/>
            <person name="Davis R.W."/>
            <person name="Scherer S."/>
        </authorList>
    </citation>
    <scope>NUCLEOTIDE SEQUENCE [LARGE SCALE GENOMIC DNA]</scope>
    <source>
        <strain>SC5314 / ATCC MYA-2876</strain>
    </source>
</reference>
<reference key="2">
    <citation type="journal article" date="2007" name="Genome Biol.">
        <title>Assembly of the Candida albicans genome into sixteen supercontigs aligned on the eight chromosomes.</title>
        <authorList>
            <person name="van het Hoog M."/>
            <person name="Rast T.J."/>
            <person name="Martchenko M."/>
            <person name="Grindle S."/>
            <person name="Dignard D."/>
            <person name="Hogues H."/>
            <person name="Cuomo C."/>
            <person name="Berriman M."/>
            <person name="Scherer S."/>
            <person name="Magee B.B."/>
            <person name="Whiteway M."/>
            <person name="Chibana H."/>
            <person name="Nantel A."/>
            <person name="Magee P.T."/>
        </authorList>
    </citation>
    <scope>GENOME REANNOTATION</scope>
    <source>
        <strain>SC5314 / ATCC MYA-2876</strain>
    </source>
</reference>
<reference key="3">
    <citation type="journal article" date="2013" name="Genome Biol.">
        <title>Assembly of a phased diploid Candida albicans genome facilitates allele-specific measurements and provides a simple model for repeat and indel structure.</title>
        <authorList>
            <person name="Muzzey D."/>
            <person name="Schwartz K."/>
            <person name="Weissman J.S."/>
            <person name="Sherlock G."/>
        </authorList>
    </citation>
    <scope>NUCLEOTIDE SEQUENCE [LARGE SCALE GENOMIC DNA]</scope>
    <scope>GENOME REANNOTATION</scope>
    <source>
        <strain>SC5314 / ATCC MYA-2876</strain>
    </source>
</reference>